<feature type="signal peptide" evidence="1">
    <location>
        <begin position="1"/>
        <end position="25"/>
    </location>
</feature>
<feature type="chain" id="PRO_0000038295" description="Glycoprotein gp2">
    <location>
        <begin position="26"/>
        <end position="383"/>
    </location>
</feature>
<feature type="transmembrane region" description="Helical" evidence="1">
    <location>
        <begin position="354"/>
        <end position="371"/>
    </location>
</feature>
<feature type="region of interest" description="Disordered" evidence="2">
    <location>
        <begin position="24"/>
        <end position="136"/>
    </location>
</feature>
<feature type="compositionally biased region" description="Low complexity" evidence="2">
    <location>
        <begin position="24"/>
        <end position="75"/>
    </location>
</feature>
<feature type="compositionally biased region" description="Basic residues" evidence="2">
    <location>
        <begin position="81"/>
        <end position="91"/>
    </location>
</feature>
<feature type="glycosylation site" description="N-linked (GlcNAc...) asparagine; by host" evidence="1">
    <location>
        <position position="48"/>
    </location>
</feature>
<feature type="glycosylation site" description="N-linked (GlcNAc...) asparagine; by host" evidence="1">
    <location>
        <position position="128"/>
    </location>
</feature>
<gene>
    <name type="primary">US4</name>
    <name type="ordered locus">71</name>
</gene>
<evidence type="ECO:0000255" key="1"/>
<evidence type="ECO:0000256" key="2">
    <source>
        <dbReference type="SAM" id="MobiDB-lite"/>
    </source>
</evidence>
<evidence type="ECO:0000305" key="3"/>
<proteinExistence type="inferred from homology"/>
<organismHost>
    <name type="scientific">Equus caballus</name>
    <name type="common">Horse</name>
    <dbReference type="NCBI Taxonomy" id="9796"/>
</organismHost>
<name>GP2_EHV1K</name>
<accession>P32515</accession>
<sequence length="383" mass="41027">MGFIYARKLLLCMAVSIYAIGSTTTTETTTSSSSTSGSGQSTSSGTTNSSSSPTTSPPTTSSSPPTSTHTSSPSTANAQKHAGHHRGRAGGRRGSPQGGSHTTPHPDRLTPSPDDTYDDDTNHPNGRNNSIEIVPQLPPDRPIIELGVATLRKNFMEASCTVETNSDLAIFWKIGKPSVDAFNRGTTHTRLMRNGVPVYALVSTLRVPWLNVIPLTKITCAACPTNLVAGDGVDLNSCTTKSTTIPCPGQQRTHIFFSAKGDRAVCITSELVSQPTITWSVGSDRLRNDGFSQTWYGIQPGVCGILRSEVRIHRTTWRFGSTSKDYLCEVSASDSKTSDYKVLPNAHSTSNFALVAATTLTVTILCLLCCLYCMLTRPRASVY</sequence>
<dbReference type="EMBL" id="M87497">
    <property type="protein sequence ID" value="AAA46072.1"/>
    <property type="molecule type" value="Genomic_DNA"/>
</dbReference>
<dbReference type="PIR" id="C42538">
    <property type="entry name" value="VGBEKG"/>
</dbReference>
<dbReference type="GlyCosmos" id="P32515">
    <property type="glycosylation" value="2 sites, No reported glycans"/>
</dbReference>
<dbReference type="GO" id="GO:0016020">
    <property type="term" value="C:membrane"/>
    <property type="evidence" value="ECO:0007669"/>
    <property type="project" value="UniProtKB-KW"/>
</dbReference>
<dbReference type="GO" id="GO:0055036">
    <property type="term" value="C:virion membrane"/>
    <property type="evidence" value="ECO:0007669"/>
    <property type="project" value="UniProtKB-SubCell"/>
</dbReference>
<dbReference type="GO" id="GO:0016032">
    <property type="term" value="P:viral process"/>
    <property type="evidence" value="ECO:0007669"/>
    <property type="project" value="InterPro"/>
</dbReference>
<dbReference type="InterPro" id="IPR010278">
    <property type="entry name" value="Varicellovirus_Gp2_glycop"/>
</dbReference>
<dbReference type="Pfam" id="PF05955">
    <property type="entry name" value="Herpes_gp2"/>
    <property type="match status" value="1"/>
</dbReference>
<organism>
    <name type="scientific">Equine herpesvirus 1 (strain Kentucky A)</name>
    <name type="common">EHV-1</name>
    <name type="synonym">Equine abortion virus</name>
    <dbReference type="NCBI Taxonomy" id="10329"/>
    <lineage>
        <taxon>Viruses</taxon>
        <taxon>Duplodnaviria</taxon>
        <taxon>Heunggongvirae</taxon>
        <taxon>Peploviricota</taxon>
        <taxon>Herviviricetes</taxon>
        <taxon>Herpesvirales</taxon>
        <taxon>Orthoherpesviridae</taxon>
        <taxon>Alphaherpesvirinae</taxon>
        <taxon>Varicellovirus</taxon>
        <taxon>Varicellovirus equidalpha1</taxon>
        <taxon>Equid alphaherpesvirus 1</taxon>
    </lineage>
</organism>
<reference key="1">
    <citation type="journal article" date="1992" name="Virology">
        <title>Open reading frames encoding a protein kinase, homolog of glycoprotein gX of pseudorabies virus, and a novel glycoprotein map within the unique short segment of equine herpesvirus type 1.</title>
        <authorList>
            <person name="Colle C.F. III"/>
            <person name="Flowers C.C."/>
            <person name="O'Callaghan D.J."/>
        </authorList>
    </citation>
    <scope>NUCLEOTIDE SEQUENCE [GENOMIC DNA]</scope>
</reference>
<protein>
    <recommendedName>
        <fullName>Glycoprotein gp2</fullName>
    </recommendedName>
    <alternativeName>
        <fullName>Glycoprotein X</fullName>
        <shortName>GpX</shortName>
    </alternativeName>
</protein>
<keyword id="KW-0325">Glycoprotein</keyword>
<keyword id="KW-0472">Membrane</keyword>
<keyword id="KW-0732">Signal</keyword>
<keyword id="KW-0812">Transmembrane</keyword>
<keyword id="KW-1133">Transmembrane helix</keyword>
<keyword id="KW-0946">Virion</keyword>
<comment type="function">
    <text>The glycoprotein gp2 from the avirulent strain Kentucky A (KyA) is probably non functional since this strain harbors an in-frame deletion of 1,242 nucleotides in gene 71.</text>
</comment>
<comment type="subcellular location">
    <subcellularLocation>
        <location evidence="3">Virion membrane</location>
        <topology evidence="3">Single-pass membrane protein</topology>
    </subcellularLocation>
</comment>